<evidence type="ECO:0000255" key="1">
    <source>
        <dbReference type="HAMAP-Rule" id="MF_00385"/>
    </source>
</evidence>
<evidence type="ECO:0000305" key="2"/>
<keyword id="KW-1185">Reference proteome</keyword>
<keyword id="KW-0687">Ribonucleoprotein</keyword>
<keyword id="KW-0689">Ribosomal protein</keyword>
<dbReference type="EMBL" id="CP000148">
    <property type="protein sequence ID" value="ABB33089.1"/>
    <property type="molecule type" value="Genomic_DNA"/>
</dbReference>
<dbReference type="RefSeq" id="WP_004514602.1">
    <property type="nucleotide sequence ID" value="NC_007517.1"/>
</dbReference>
<dbReference type="SMR" id="Q39RN5"/>
<dbReference type="STRING" id="269799.Gmet_2871"/>
<dbReference type="KEGG" id="gme:Gmet_2871"/>
<dbReference type="eggNOG" id="COG0228">
    <property type="taxonomic scope" value="Bacteria"/>
</dbReference>
<dbReference type="HOGENOM" id="CLU_100590_5_0_7"/>
<dbReference type="Proteomes" id="UP000007073">
    <property type="component" value="Chromosome"/>
</dbReference>
<dbReference type="GO" id="GO:0005737">
    <property type="term" value="C:cytoplasm"/>
    <property type="evidence" value="ECO:0007669"/>
    <property type="project" value="UniProtKB-ARBA"/>
</dbReference>
<dbReference type="GO" id="GO:0015935">
    <property type="term" value="C:small ribosomal subunit"/>
    <property type="evidence" value="ECO:0007669"/>
    <property type="project" value="TreeGrafter"/>
</dbReference>
<dbReference type="GO" id="GO:0003735">
    <property type="term" value="F:structural constituent of ribosome"/>
    <property type="evidence" value="ECO:0007669"/>
    <property type="project" value="InterPro"/>
</dbReference>
<dbReference type="GO" id="GO:0006412">
    <property type="term" value="P:translation"/>
    <property type="evidence" value="ECO:0007669"/>
    <property type="project" value="UniProtKB-UniRule"/>
</dbReference>
<dbReference type="Gene3D" id="3.30.1320.10">
    <property type="match status" value="1"/>
</dbReference>
<dbReference type="HAMAP" id="MF_00385">
    <property type="entry name" value="Ribosomal_bS16"/>
    <property type="match status" value="1"/>
</dbReference>
<dbReference type="InterPro" id="IPR000307">
    <property type="entry name" value="Ribosomal_bS16"/>
</dbReference>
<dbReference type="InterPro" id="IPR020592">
    <property type="entry name" value="Ribosomal_bS16_CS"/>
</dbReference>
<dbReference type="InterPro" id="IPR023803">
    <property type="entry name" value="Ribosomal_bS16_dom_sf"/>
</dbReference>
<dbReference type="NCBIfam" id="TIGR00002">
    <property type="entry name" value="S16"/>
    <property type="match status" value="1"/>
</dbReference>
<dbReference type="PANTHER" id="PTHR12919">
    <property type="entry name" value="30S RIBOSOMAL PROTEIN S16"/>
    <property type="match status" value="1"/>
</dbReference>
<dbReference type="PANTHER" id="PTHR12919:SF20">
    <property type="entry name" value="SMALL RIBOSOMAL SUBUNIT PROTEIN BS16M"/>
    <property type="match status" value="1"/>
</dbReference>
<dbReference type="Pfam" id="PF00886">
    <property type="entry name" value="Ribosomal_S16"/>
    <property type="match status" value="1"/>
</dbReference>
<dbReference type="SUPFAM" id="SSF54565">
    <property type="entry name" value="Ribosomal protein S16"/>
    <property type="match status" value="1"/>
</dbReference>
<dbReference type="PROSITE" id="PS00732">
    <property type="entry name" value="RIBOSOMAL_S16"/>
    <property type="match status" value="1"/>
</dbReference>
<organism>
    <name type="scientific">Geobacter metallireducens (strain ATCC 53774 / DSM 7210 / GS-15)</name>
    <dbReference type="NCBI Taxonomy" id="269799"/>
    <lineage>
        <taxon>Bacteria</taxon>
        <taxon>Pseudomonadati</taxon>
        <taxon>Thermodesulfobacteriota</taxon>
        <taxon>Desulfuromonadia</taxon>
        <taxon>Geobacterales</taxon>
        <taxon>Geobacteraceae</taxon>
        <taxon>Geobacter</taxon>
    </lineage>
</organism>
<name>RS16_GEOMG</name>
<protein>
    <recommendedName>
        <fullName evidence="1">Small ribosomal subunit protein bS16</fullName>
    </recommendedName>
    <alternativeName>
        <fullName evidence="2">30S ribosomal protein S16</fullName>
    </alternativeName>
</protein>
<comment type="similarity">
    <text evidence="1">Belongs to the bacterial ribosomal protein bS16 family.</text>
</comment>
<feature type="chain" id="PRO_0000243811" description="Small ribosomal subunit protein bS16">
    <location>
        <begin position="1"/>
        <end position="88"/>
    </location>
</feature>
<reference key="1">
    <citation type="journal article" date="2009" name="BMC Microbiol.">
        <title>The genome sequence of Geobacter metallireducens: features of metabolism, physiology and regulation common and dissimilar to Geobacter sulfurreducens.</title>
        <authorList>
            <person name="Aklujkar M."/>
            <person name="Krushkal J."/>
            <person name="DiBartolo G."/>
            <person name="Lapidus A."/>
            <person name="Land M.L."/>
            <person name="Lovley D.R."/>
        </authorList>
    </citation>
    <scope>NUCLEOTIDE SEQUENCE [LARGE SCALE GENOMIC DNA]</scope>
    <source>
        <strain>ATCC 53774 / DSM 7210 / GS-15</strain>
    </source>
</reference>
<gene>
    <name evidence="1" type="primary">rpsP</name>
    <name type="ordered locus">Gmet_2871</name>
</gene>
<accession>Q39RN5</accession>
<proteinExistence type="inferred from homology"/>
<sequence>MAIKMRLARAGAKKKPFYQIVIADVRSRRDGRFIENVGTYDPNQNPAAVKFEEGKALEWLGKGAQPTDTVKQMLKTAGLWEKFTTKPA</sequence>